<dbReference type="EMBL" id="CP000647">
    <property type="protein sequence ID" value="ABR76387.1"/>
    <property type="molecule type" value="Genomic_DNA"/>
</dbReference>
<dbReference type="RefSeq" id="WP_012068512.1">
    <property type="nucleotide sequence ID" value="NC_009648.1"/>
</dbReference>
<dbReference type="SMR" id="A6T716"/>
<dbReference type="STRING" id="272620.KPN_00951"/>
<dbReference type="jPOST" id="A6T716"/>
<dbReference type="PaxDb" id="272620-KPN_00951"/>
<dbReference type="EnsemblBacteria" id="ABR76387">
    <property type="protein sequence ID" value="ABR76387"/>
    <property type="gene ID" value="KPN_00951"/>
</dbReference>
<dbReference type="KEGG" id="kpn:KPN_00951"/>
<dbReference type="HOGENOM" id="CLU_004430_0_0_6"/>
<dbReference type="Proteomes" id="UP000000265">
    <property type="component" value="Chromosome"/>
</dbReference>
<dbReference type="GO" id="GO:0005737">
    <property type="term" value="C:cytoplasm"/>
    <property type="evidence" value="ECO:0007669"/>
    <property type="project" value="UniProtKB-UniRule"/>
</dbReference>
<dbReference type="GO" id="GO:0009295">
    <property type="term" value="C:nucleoid"/>
    <property type="evidence" value="ECO:0007669"/>
    <property type="project" value="UniProtKB-SubCell"/>
</dbReference>
<dbReference type="GO" id="GO:0005524">
    <property type="term" value="F:ATP binding"/>
    <property type="evidence" value="ECO:0007669"/>
    <property type="project" value="UniProtKB-UniRule"/>
</dbReference>
<dbReference type="GO" id="GO:0003677">
    <property type="term" value="F:DNA binding"/>
    <property type="evidence" value="ECO:0007669"/>
    <property type="project" value="UniProtKB-UniRule"/>
</dbReference>
<dbReference type="GO" id="GO:0051301">
    <property type="term" value="P:cell division"/>
    <property type="evidence" value="ECO:0007669"/>
    <property type="project" value="UniProtKB-KW"/>
</dbReference>
<dbReference type="GO" id="GO:0030261">
    <property type="term" value="P:chromosome condensation"/>
    <property type="evidence" value="ECO:0007669"/>
    <property type="project" value="UniProtKB-KW"/>
</dbReference>
<dbReference type="GO" id="GO:0007059">
    <property type="term" value="P:chromosome segregation"/>
    <property type="evidence" value="ECO:0007669"/>
    <property type="project" value="UniProtKB-UniRule"/>
</dbReference>
<dbReference type="GO" id="GO:0006260">
    <property type="term" value="P:DNA replication"/>
    <property type="evidence" value="ECO:0007669"/>
    <property type="project" value="UniProtKB-UniRule"/>
</dbReference>
<dbReference type="FunFam" id="3.30.70.3500:FF:000001">
    <property type="entry name" value="Chromosome partition protein MukB"/>
    <property type="match status" value="1"/>
</dbReference>
<dbReference type="FunFam" id="3.40.1140.10:FF:000001">
    <property type="entry name" value="Chromosome partition protein MukB"/>
    <property type="match status" value="1"/>
</dbReference>
<dbReference type="FunFam" id="3.40.1140.10:FF:000002">
    <property type="entry name" value="Chromosome partition protein MukB"/>
    <property type="match status" value="1"/>
</dbReference>
<dbReference type="Gene3D" id="1.20.58.850">
    <property type="match status" value="1"/>
</dbReference>
<dbReference type="Gene3D" id="3.40.1140.10">
    <property type="match status" value="2"/>
</dbReference>
<dbReference type="Gene3D" id="1.20.5.420">
    <property type="entry name" value="Immunoglobulin FC, subunit C"/>
    <property type="match status" value="1"/>
</dbReference>
<dbReference type="Gene3D" id="3.30.70.3500">
    <property type="entry name" value="MukB, hinge domain"/>
    <property type="match status" value="1"/>
</dbReference>
<dbReference type="HAMAP" id="MF_01800">
    <property type="entry name" value="MukB"/>
    <property type="match status" value="1"/>
</dbReference>
<dbReference type="InterPro" id="IPR012090">
    <property type="entry name" value="MukB"/>
</dbReference>
<dbReference type="InterPro" id="IPR050308">
    <property type="entry name" value="MukB/SMC"/>
</dbReference>
<dbReference type="InterPro" id="IPR032520">
    <property type="entry name" value="MukB_hinge"/>
</dbReference>
<dbReference type="InterPro" id="IPR042501">
    <property type="entry name" value="MukB_hinge_sf"/>
</dbReference>
<dbReference type="InterPro" id="IPR007406">
    <property type="entry name" value="MukB_N_dom"/>
</dbReference>
<dbReference type="InterPro" id="IPR027417">
    <property type="entry name" value="P-loop_NTPase"/>
</dbReference>
<dbReference type="NCBIfam" id="NF003422">
    <property type="entry name" value="PRK04863.1"/>
    <property type="match status" value="1"/>
</dbReference>
<dbReference type="PANTHER" id="PTHR42963">
    <property type="entry name" value="CHROMOSOME PARTITION PROTEIN MUKB"/>
    <property type="match status" value="1"/>
</dbReference>
<dbReference type="PANTHER" id="PTHR42963:SF1">
    <property type="entry name" value="DUF4476 DOMAIN-CONTAINING PROTEIN"/>
    <property type="match status" value="1"/>
</dbReference>
<dbReference type="Pfam" id="PF04310">
    <property type="entry name" value="MukB"/>
    <property type="match status" value="1"/>
</dbReference>
<dbReference type="Pfam" id="PF16330">
    <property type="entry name" value="MukB_hinge"/>
    <property type="match status" value="1"/>
</dbReference>
<dbReference type="Pfam" id="PF13558">
    <property type="entry name" value="SbcC_Walker_B"/>
    <property type="match status" value="1"/>
</dbReference>
<dbReference type="PIRSF" id="PIRSF005246">
    <property type="entry name" value="MukB"/>
    <property type="match status" value="1"/>
</dbReference>
<dbReference type="SUPFAM" id="SSF52540">
    <property type="entry name" value="P-loop containing nucleoside triphosphate hydrolases"/>
    <property type="match status" value="2"/>
</dbReference>
<accession>A6T716</accession>
<gene>
    <name evidence="1" type="primary">mukB</name>
    <name type="ordered locus">KPN78578_09260</name>
    <name type="ORF">KPN_00951</name>
</gene>
<reference key="1">
    <citation type="submission" date="2006-09" db="EMBL/GenBank/DDBJ databases">
        <authorList>
            <consortium name="The Klebsiella pneumonia Genome Sequencing Project"/>
            <person name="McClelland M."/>
            <person name="Sanderson E.K."/>
            <person name="Spieth J."/>
            <person name="Clifton W.S."/>
            <person name="Latreille P."/>
            <person name="Sabo A."/>
            <person name="Pepin K."/>
            <person name="Bhonagiri V."/>
            <person name="Porwollik S."/>
            <person name="Ali J."/>
            <person name="Wilson R.K."/>
        </authorList>
    </citation>
    <scope>NUCLEOTIDE SEQUENCE [LARGE SCALE GENOMIC DNA]</scope>
    <source>
        <strain>ATCC 700721 / MGH 78578</strain>
    </source>
</reference>
<feature type="chain" id="PRO_1000069910" description="Chromosome partition protein MukB">
    <location>
        <begin position="1"/>
        <end position="1482"/>
    </location>
</feature>
<feature type="region of interest" description="Flexible hinge" evidence="1">
    <location>
        <begin position="666"/>
        <end position="783"/>
    </location>
</feature>
<feature type="coiled-coil region" evidence="1">
    <location>
        <begin position="326"/>
        <end position="472"/>
    </location>
</feature>
<feature type="coiled-coil region" evidence="1">
    <location>
        <begin position="507"/>
        <end position="602"/>
    </location>
</feature>
<feature type="coiled-coil region" evidence="1">
    <location>
        <begin position="780"/>
        <end position="805"/>
    </location>
</feature>
<feature type="coiled-coil region" evidence="1">
    <location>
        <begin position="832"/>
        <end position="1110"/>
    </location>
</feature>
<feature type="coiled-coil region" evidence="1">
    <location>
        <begin position="1209"/>
        <end position="1265"/>
    </location>
</feature>
<feature type="binding site" evidence="1">
    <location>
        <begin position="34"/>
        <end position="41"/>
    </location>
    <ligand>
        <name>ATP</name>
        <dbReference type="ChEBI" id="CHEBI:30616"/>
    </ligand>
</feature>
<protein>
    <recommendedName>
        <fullName evidence="1">Chromosome partition protein MukB</fullName>
    </recommendedName>
    <alternativeName>
        <fullName evidence="1">Structural maintenance of chromosome-related protein</fullName>
    </alternativeName>
</protein>
<organism>
    <name type="scientific">Klebsiella pneumoniae subsp. pneumoniae (strain ATCC 700721 / MGH 78578)</name>
    <dbReference type="NCBI Taxonomy" id="272620"/>
    <lineage>
        <taxon>Bacteria</taxon>
        <taxon>Pseudomonadati</taxon>
        <taxon>Pseudomonadota</taxon>
        <taxon>Gammaproteobacteria</taxon>
        <taxon>Enterobacterales</taxon>
        <taxon>Enterobacteriaceae</taxon>
        <taxon>Klebsiella/Raoultella group</taxon>
        <taxon>Klebsiella</taxon>
        <taxon>Klebsiella pneumoniae complex</taxon>
    </lineage>
</organism>
<name>MUKB_KLEP7</name>
<keyword id="KW-0067">ATP-binding</keyword>
<keyword id="KW-0131">Cell cycle</keyword>
<keyword id="KW-0132">Cell division</keyword>
<keyword id="KW-0159">Chromosome partition</keyword>
<keyword id="KW-0175">Coiled coil</keyword>
<keyword id="KW-0963">Cytoplasm</keyword>
<keyword id="KW-0226">DNA condensation</keyword>
<keyword id="KW-0238">DNA-binding</keyword>
<keyword id="KW-0547">Nucleotide-binding</keyword>
<sequence length="1482" mass="169555">MIERGKFRSLTLVNWNGFFARTFDLDELVTTLSGGNGAGKSTTMAAFVTALIPDLTLLHFRNTTEAGATSGSRDKGLHGKLRAGVCYSVLDVINSRHQRVVVGVRLQQVAGRDRKVDIKPFAIQGLPTSILPTQLLTETLNDRQARVVSLNELKDKLEAMEGVQFKQFNSITEYHSLMFDLGVVARRLRSASDRSKYYRLIEASLYGGISSTITRSLRDYLLPENSGVRKAFQDMEAALRENRMTLEAIRVTQSDRDLFKHLISEATNYVAADYMRHANERRIHLDKALEYRRDLFTSRSQLAAEQYKHVDMARELQEHNGAEGDLEADYQAASDHLNLVQTALRQQEKIERYEADLDELQIRLEEQNEVVAEAVDRQEENEARAEAAELEVDELKSQLADYQQALDVQQTRAIQYNQALQALERAKALCHLPDLTPESADEWLETFQAKEQEATEKMLSLEQKMSVAQTAHSQFEQAYQLVAAINGPLARNEAWDVARELLRDGVNQRHQAEQAQGLRSRLNELEQRLREQQDAERQLAEFCKRQGKRYDIDDLETLHQELEARIASLADSVSNAQEQRMALRQELEQLQSRTQTLMRRAPVWLAAQNSLNQLCEQSGEQFASGQEVTEYLQQLLEREREAIVERDEVGARKRAIDEEIERLSQPGGSEDPRLNALAERFGGVLLSEIYDDVSLDDAPYFSALYGPSRHAIVVPDLSRVAEQLEGLEDCPEDLYLIEGDPQSFDDSVFSVDELEKAVVVKIADRQWRYSRFPSLPLFGRAARENRIETLHAERESLSERFATLSFDVQKTQRLHQAFSRFIGSHLAVAFEDDPEEEIRKLNSRRGELERALSAHESDNQQNRVQYEQAKEGVSALNRLLPRLNLLADDTLADRVDEIQERLDEAQEAARFIQQYGNQLAKLEPIVSVLQSDPEQFEQLKEDYAYAQQTQRDARQQAFALAEVVQRRAHFSYSDSAEMLSGNSDLNEKLRQRLEQAESERSRARDAMRAHAAQLSQYNQVLASLKSSYDTKKELLNDLYKELQDIGVRADAGAEERARARRDELHMQLSNNRSRRNQLEKALTFCEAEMDNLTRKLRKLERDYCEMREQVVTAKAGWCAVMRLVKDNGVERRLHRRELAYLSADELRSMSDKALGALRLAVADNEHLRDVLRISEDPKRPERKIQFFVAVYQHLRERIRQDIIRTDDPVEAIEQMEIELSRLTEELTNREQKLAISSRSVANIIRKTIQREQNRIRMLNQGLQSVSFGQVNSVRLNVNVRETHSMLLDVLSEQHEQHQDLFNSNRLTFSEALAKLYQRLNPQIDMGQRTPQTIGEELLDYRNYLEMEVEVNRGSDGWLRAESGALSTGEAIGTGMSILVMVVQSWEDESRRLRGKDISPCRLLFLDEAARLDARSIATLFELCERLEMQLIIAAPENISPEKGTTYKLVRKVFNNHEHVHVVGLRGFAAPLPEALPGTADAS</sequence>
<evidence type="ECO:0000255" key="1">
    <source>
        <dbReference type="HAMAP-Rule" id="MF_01800"/>
    </source>
</evidence>
<comment type="function">
    <text evidence="1">Plays a central role in chromosome condensation, segregation and cell cycle progression. Functions as a homodimer, which is essential for chromosome partition. Involved in negative DNA supercoiling in vivo, and by this means organize and compact chromosomes. May achieve or facilitate chromosome segregation by condensation DNA from both sides of a centrally located replisome during cell division.</text>
</comment>
<comment type="subunit">
    <text evidence="1">Homodimerization via its hinge domain. Binds to DNA via its C-terminal region. Interacts, and probably forms a ternary complex, with MukE and MukF via its C-terminal region. The complex formation is stimulated by calcium or magnesium. Interacts with tubulin-related protein FtsZ.</text>
</comment>
<comment type="subcellular location">
    <subcellularLocation>
        <location evidence="1">Cytoplasm</location>
        <location evidence="1">Nucleoid</location>
    </subcellularLocation>
    <text evidence="1">Restricted to the nucleoid region.</text>
</comment>
<comment type="domain">
    <text evidence="1">The hinge domain, which separates the large intramolecular coiled coil regions, allows the homodimerization, forming a V-shaped homodimer.</text>
</comment>
<comment type="similarity">
    <text evidence="1">Belongs to the SMC family. MukB subfamily.</text>
</comment>
<proteinExistence type="inferred from homology"/>